<reference key="1">
    <citation type="submission" date="2007-03" db="EMBL/GenBank/DDBJ databases">
        <title>Sequencing analysis of Draba nemoroza chloroplast DNA.</title>
        <authorList>
            <person name="Hosouchi T."/>
            <person name="Tsuruoka H."/>
            <person name="Kotani H."/>
        </authorList>
    </citation>
    <scope>NUCLEOTIDE SEQUENCE [LARGE SCALE GENOMIC DNA]</scope>
</reference>
<proteinExistence type="inferred from homology"/>
<keyword id="KW-0066">ATP synthesis</keyword>
<keyword id="KW-0138">CF(0)</keyword>
<keyword id="KW-0150">Chloroplast</keyword>
<keyword id="KW-0375">Hydrogen ion transport</keyword>
<keyword id="KW-0406">Ion transport</keyword>
<keyword id="KW-0472">Membrane</keyword>
<keyword id="KW-0934">Plastid</keyword>
<keyword id="KW-0793">Thylakoid</keyword>
<keyword id="KW-0812">Transmembrane</keyword>
<keyword id="KW-1133">Transmembrane helix</keyword>
<keyword id="KW-0813">Transport</keyword>
<feature type="chain" id="PRO_0000368930" description="ATP synthase subunit b, chloroplastic">
    <location>
        <begin position="1"/>
        <end position="184"/>
    </location>
</feature>
<feature type="transmembrane region" description="Helical" evidence="1">
    <location>
        <begin position="27"/>
        <end position="49"/>
    </location>
</feature>
<name>ATPF_DRANE</name>
<protein>
    <recommendedName>
        <fullName evidence="1">ATP synthase subunit b, chloroplastic</fullName>
    </recommendedName>
    <alternativeName>
        <fullName evidence="1">ATP synthase F(0) sector subunit b</fullName>
    </alternativeName>
    <alternativeName>
        <fullName evidence="1">ATPase subunit I</fullName>
    </alternativeName>
</protein>
<dbReference type="EMBL" id="AP009373">
    <property type="protein sequence ID" value="BAF50360.1"/>
    <property type="molecule type" value="Genomic_DNA"/>
</dbReference>
<dbReference type="RefSeq" id="YP_001123536.1">
    <property type="nucleotide sequence ID" value="NC_009272.1"/>
</dbReference>
<dbReference type="SMR" id="A4QL05"/>
<dbReference type="GeneID" id="4964706"/>
<dbReference type="GO" id="GO:0009535">
    <property type="term" value="C:chloroplast thylakoid membrane"/>
    <property type="evidence" value="ECO:0007669"/>
    <property type="project" value="UniProtKB-SubCell"/>
</dbReference>
<dbReference type="GO" id="GO:0045259">
    <property type="term" value="C:proton-transporting ATP synthase complex"/>
    <property type="evidence" value="ECO:0007669"/>
    <property type="project" value="UniProtKB-KW"/>
</dbReference>
<dbReference type="GO" id="GO:0046933">
    <property type="term" value="F:proton-transporting ATP synthase activity, rotational mechanism"/>
    <property type="evidence" value="ECO:0007669"/>
    <property type="project" value="UniProtKB-UniRule"/>
</dbReference>
<dbReference type="CDD" id="cd06503">
    <property type="entry name" value="ATP-synt_Fo_b"/>
    <property type="match status" value="1"/>
</dbReference>
<dbReference type="HAMAP" id="MF_01398">
    <property type="entry name" value="ATP_synth_b_bprime"/>
    <property type="match status" value="1"/>
</dbReference>
<dbReference type="InterPro" id="IPR002146">
    <property type="entry name" value="ATP_synth_b/b'su_bac/chlpt"/>
</dbReference>
<dbReference type="PANTHER" id="PTHR34264">
    <property type="entry name" value="ATP SYNTHASE SUBUNIT B, CHLOROPLASTIC"/>
    <property type="match status" value="1"/>
</dbReference>
<dbReference type="PANTHER" id="PTHR34264:SF3">
    <property type="entry name" value="ATP SYNTHASE SUBUNIT B, CHLOROPLASTIC"/>
    <property type="match status" value="1"/>
</dbReference>
<dbReference type="Pfam" id="PF00430">
    <property type="entry name" value="ATP-synt_B"/>
    <property type="match status" value="1"/>
</dbReference>
<sequence length="184" mass="21129">MKNLTDSFVYLGHWPSAGSFGFNTDILATNPINLSVVFGVLIFFGKGVLNDLLDNRKQRILNTIRNSEELRERAIQQLENARARLRKVETEADQFRVNGYSEIEREKLNLINSTYRTLKQLENYKNETILFEQQRTINQVRERVFQQALQGAIGTLNSCLSNELHLSTINANIGMFGTMKEITD</sequence>
<evidence type="ECO:0000255" key="1">
    <source>
        <dbReference type="HAMAP-Rule" id="MF_01398"/>
    </source>
</evidence>
<geneLocation type="chloroplast"/>
<comment type="function">
    <text evidence="1">F(1)F(0) ATP synthase produces ATP from ADP in the presence of a proton or sodium gradient. F-type ATPases consist of two structural domains, F(1) containing the extramembraneous catalytic core and F(0) containing the membrane proton channel, linked together by a central stalk and a peripheral stalk. During catalysis, ATP synthesis in the catalytic domain of F(1) is coupled via a rotary mechanism of the central stalk subunits to proton translocation.</text>
</comment>
<comment type="function">
    <text evidence="1">Component of the F(0) channel, it forms part of the peripheral stalk, linking F(1) to F(0).</text>
</comment>
<comment type="subunit">
    <text evidence="1">F-type ATPases have 2 components, F(1) - the catalytic core - and F(0) - the membrane proton channel. F(1) has five subunits: alpha(3), beta(3), gamma(1), delta(1), epsilon(1). F(0) has four main subunits: a(1), b(1), b'(1) and c(10-14). The alpha and beta chains form an alternating ring which encloses part of the gamma chain. F(1) is attached to F(0) by a central stalk formed by the gamma and epsilon chains, while a peripheral stalk is formed by the delta, b and b' chains.</text>
</comment>
<comment type="subcellular location">
    <subcellularLocation>
        <location evidence="1">Plastid</location>
        <location evidence="1">Chloroplast thylakoid membrane</location>
        <topology evidence="1">Single-pass membrane protein</topology>
    </subcellularLocation>
</comment>
<comment type="miscellaneous">
    <text>In plastids the F-type ATPase is also known as CF(1)CF(0).</text>
</comment>
<comment type="similarity">
    <text evidence="1">Belongs to the ATPase B chain family.</text>
</comment>
<gene>
    <name evidence="1" type="primary">atpF</name>
</gene>
<organism>
    <name type="scientific">Draba nemorosa</name>
    <name type="common">Woodland whitlowgrass</name>
    <dbReference type="NCBI Taxonomy" id="171822"/>
    <lineage>
        <taxon>Eukaryota</taxon>
        <taxon>Viridiplantae</taxon>
        <taxon>Streptophyta</taxon>
        <taxon>Embryophyta</taxon>
        <taxon>Tracheophyta</taxon>
        <taxon>Spermatophyta</taxon>
        <taxon>Magnoliopsida</taxon>
        <taxon>eudicotyledons</taxon>
        <taxon>Gunneridae</taxon>
        <taxon>Pentapetalae</taxon>
        <taxon>rosids</taxon>
        <taxon>malvids</taxon>
        <taxon>Brassicales</taxon>
        <taxon>Brassicaceae</taxon>
        <taxon>Arabideae</taxon>
        <taxon>Draba</taxon>
    </lineage>
</organism>
<accession>A4QL05</accession>